<proteinExistence type="evidence at protein level"/>
<protein>
    <recommendedName>
        <fullName evidence="1">ATP synthase subunit alpha</fullName>
        <ecNumber evidence="1">7.1.2.2</ecNumber>
    </recommendedName>
    <alternativeName>
        <fullName evidence="1">ATP synthase F1 sector subunit alpha</fullName>
    </alternativeName>
    <alternativeName>
        <fullName evidence="1">F-ATPase subunit alpha</fullName>
    </alternativeName>
</protein>
<sequence>MQLNSTEISELIKQRIAQFNVVSEAHNEGTIVSVSDGVIRIHGLADCMQGEMISLPGNRYAIALNLERDSVGAVVMGPYADLAEGMKVKCTGRILEVPVGRGLLGRVVNTLGAPIDGKGPLDHDGFSAVEAIAPGVIERQSVDQPVQTGYKAVDSMIPIGRGQRELIIGDRQTGKTALAIDAIINQRDSGIKCIYVAIGQKASTISNVVRKLEEHGALANTIVVVATASESAALQYLAPYAGCAMGEYFRDRGEDALIIYDDLSKQAVAYRQISLLLRRPPGREAFPGDVFYLHSRLLERAARVNAEYVEAFTKGEVKGKTGSLTALPIIETQAGDVSAFVPTNVISITDGQIFLETNLFNAGIRPAVNPGISVSRVGGAAQTKIMKKLSGGIRTALAQYRELAAFSQFASDLDDATRKQLDHGQKVTELLKQKQYAPMSVAQQSLVLFAAERGYLADVELSKIGSFEAALLAYVDRDHAPLMQEINQTGGYNDEIEGKLKGILDSFKATQSW</sequence>
<name>ATPA_ECOLI</name>
<accession>P0ABB0</accession>
<accession>P00822</accession>
<accession>Q2M852</accession>
<accession>Q47249</accession>
<keyword id="KW-0002">3D-structure</keyword>
<keyword id="KW-0066">ATP synthesis</keyword>
<keyword id="KW-0067">ATP-binding</keyword>
<keyword id="KW-0997">Cell inner membrane</keyword>
<keyword id="KW-1003">Cell membrane</keyword>
<keyword id="KW-0139">CF(1)</keyword>
<keyword id="KW-0903">Direct protein sequencing</keyword>
<keyword id="KW-0375">Hydrogen ion transport</keyword>
<keyword id="KW-0406">Ion transport</keyword>
<keyword id="KW-0472">Membrane</keyword>
<keyword id="KW-0547">Nucleotide-binding</keyword>
<keyword id="KW-1185">Reference proteome</keyword>
<keyword id="KW-1278">Translocase</keyword>
<keyword id="KW-0813">Transport</keyword>
<feature type="chain" id="PRO_0000144325" description="ATP synthase subunit alpha">
    <location>
        <begin position="1"/>
        <end position="513"/>
    </location>
</feature>
<feature type="binding site" evidence="4">
    <location>
        <begin position="169"/>
        <end position="176"/>
    </location>
    <ligand>
        <name>ATP</name>
        <dbReference type="ChEBI" id="CHEBI:30616"/>
    </ligand>
</feature>
<feature type="site" description="Required for activity">
    <location>
        <position position="373"/>
    </location>
</feature>
<feature type="mutagenesis site" description="Reduced activity and reduced ATP-binding." evidence="3">
    <original>K</original>
    <variation>E</variation>
    <location>
        <position position="175"/>
    </location>
</feature>
<feature type="mutagenesis site" description="Reduced activity and loss of ATP-binding." evidence="3">
    <original>K</original>
    <variation>I</variation>
    <location>
        <position position="175"/>
    </location>
</feature>
<feature type="sequence conflict" description="In Ref. 4; AAA83873." evidence="4" ref="4">
    <original>T</original>
    <variation>I</variation>
    <location>
        <position position="91"/>
    </location>
</feature>
<feature type="sequence conflict" description="In Ref. 4; CAA25780/AAA24735." evidence="4" ref="4">
    <original>PYAGCA</original>
    <variation>RMPVAL</variation>
    <location>
        <begin position="239"/>
        <end position="244"/>
    </location>
</feature>
<feature type="sequence conflict" description="In Ref. 2; CAA23519." evidence="4" ref="2">
    <original>RAA</original>
    <variation>MLQ</variation>
    <location>
        <begin position="300"/>
        <end position="302"/>
    </location>
</feature>
<feature type="helix" evidence="6">
    <location>
        <begin position="9"/>
        <end position="17"/>
    </location>
</feature>
<feature type="helix" evidence="7">
    <location>
        <begin position="21"/>
        <end position="23"/>
    </location>
</feature>
<feature type="strand" evidence="6">
    <location>
        <begin position="28"/>
        <end position="35"/>
    </location>
</feature>
<feature type="strand" evidence="6">
    <location>
        <begin position="38"/>
        <end position="43"/>
    </location>
</feature>
<feature type="strand" evidence="6">
    <location>
        <begin position="52"/>
        <end position="55"/>
    </location>
</feature>
<feature type="turn" evidence="6">
    <location>
        <begin position="56"/>
        <end position="58"/>
    </location>
</feature>
<feature type="strand" evidence="6">
    <location>
        <begin position="59"/>
        <end position="67"/>
    </location>
</feature>
<feature type="strand" evidence="6">
    <location>
        <begin position="70"/>
        <end position="77"/>
    </location>
</feature>
<feature type="strand" evidence="6">
    <location>
        <begin position="87"/>
        <end position="90"/>
    </location>
</feature>
<feature type="strand" evidence="6">
    <location>
        <begin position="96"/>
        <end position="98"/>
    </location>
</feature>
<feature type="helix" evidence="6">
    <location>
        <begin position="101"/>
        <end position="103"/>
    </location>
</feature>
<feature type="strand" evidence="6">
    <location>
        <begin position="107"/>
        <end position="109"/>
    </location>
</feature>
<feature type="strand" evidence="6">
    <location>
        <begin position="116"/>
        <end position="118"/>
    </location>
</feature>
<feature type="strand" evidence="6">
    <location>
        <begin position="126"/>
        <end position="130"/>
    </location>
</feature>
<feature type="helix" evidence="6">
    <location>
        <begin position="136"/>
        <end position="138"/>
    </location>
</feature>
<feature type="strand" evidence="7">
    <location>
        <begin position="144"/>
        <end position="146"/>
    </location>
</feature>
<feature type="helix" evidence="6">
    <location>
        <begin position="151"/>
        <end position="156"/>
    </location>
</feature>
<feature type="strand" evidence="6">
    <location>
        <begin position="164"/>
        <end position="169"/>
    </location>
</feature>
<feature type="strand" evidence="6">
    <location>
        <begin position="171"/>
        <end position="174"/>
    </location>
</feature>
<feature type="helix" evidence="6">
    <location>
        <begin position="175"/>
        <end position="184"/>
    </location>
</feature>
<feature type="turn" evidence="6">
    <location>
        <begin position="185"/>
        <end position="189"/>
    </location>
</feature>
<feature type="strand" evidence="6">
    <location>
        <begin position="190"/>
        <end position="199"/>
    </location>
</feature>
<feature type="helix" evidence="6">
    <location>
        <begin position="202"/>
        <end position="214"/>
    </location>
</feature>
<feature type="turn" evidence="6">
    <location>
        <begin position="215"/>
        <end position="217"/>
    </location>
</feature>
<feature type="helix" evidence="6">
    <location>
        <begin position="218"/>
        <end position="220"/>
    </location>
</feature>
<feature type="strand" evidence="6">
    <location>
        <begin position="221"/>
        <end position="226"/>
    </location>
</feature>
<feature type="helix" evidence="6">
    <location>
        <begin position="232"/>
        <end position="250"/>
    </location>
</feature>
<feature type="turn" evidence="6">
    <location>
        <begin position="251"/>
        <end position="253"/>
    </location>
</feature>
<feature type="strand" evidence="6">
    <location>
        <begin position="255"/>
        <end position="261"/>
    </location>
</feature>
<feature type="helix" evidence="6">
    <location>
        <begin position="263"/>
        <end position="276"/>
    </location>
</feature>
<feature type="helix" evidence="6">
    <location>
        <begin position="283"/>
        <end position="285"/>
    </location>
</feature>
<feature type="helix" evidence="6">
    <location>
        <begin position="290"/>
        <end position="298"/>
    </location>
</feature>
<feature type="strand" evidence="5">
    <location>
        <begin position="302"/>
        <end position="304"/>
    </location>
</feature>
<feature type="helix" evidence="6">
    <location>
        <begin position="306"/>
        <end position="312"/>
    </location>
</feature>
<feature type="turn" evidence="6">
    <location>
        <begin position="313"/>
        <end position="315"/>
    </location>
</feature>
<feature type="strand" evidence="6">
    <location>
        <begin position="322"/>
        <end position="326"/>
    </location>
</feature>
<feature type="strand" evidence="6">
    <location>
        <begin position="329"/>
        <end position="331"/>
    </location>
</feature>
<feature type="helix" evidence="6">
    <location>
        <begin position="333"/>
        <end position="335"/>
    </location>
</feature>
<feature type="helix" evidence="6">
    <location>
        <begin position="340"/>
        <end position="348"/>
    </location>
</feature>
<feature type="strand" evidence="6">
    <location>
        <begin position="349"/>
        <end position="355"/>
    </location>
</feature>
<feature type="helix" evidence="6">
    <location>
        <begin position="357"/>
        <end position="361"/>
    </location>
</feature>
<feature type="turn" evidence="6">
    <location>
        <begin position="370"/>
        <end position="372"/>
    </location>
</feature>
<feature type="strand" evidence="6">
    <location>
        <begin position="374"/>
        <end position="377"/>
    </location>
</feature>
<feature type="helix" evidence="6">
    <location>
        <begin position="378"/>
        <end position="381"/>
    </location>
</feature>
<feature type="helix" evidence="6">
    <location>
        <begin position="384"/>
        <end position="403"/>
    </location>
</feature>
<feature type="helix" evidence="6">
    <location>
        <begin position="404"/>
        <end position="412"/>
    </location>
</feature>
<feature type="helix" evidence="6">
    <location>
        <begin position="415"/>
        <end position="430"/>
    </location>
</feature>
<feature type="helix" evidence="6">
    <location>
        <begin position="441"/>
        <end position="452"/>
    </location>
</feature>
<feature type="helix" evidence="6">
    <location>
        <begin position="455"/>
        <end position="457"/>
    </location>
</feature>
<feature type="helix" evidence="6">
    <location>
        <begin position="461"/>
        <end position="463"/>
    </location>
</feature>
<feature type="helix" evidence="6">
    <location>
        <begin position="464"/>
        <end position="478"/>
    </location>
</feature>
<feature type="helix" evidence="6">
    <location>
        <begin position="480"/>
        <end position="489"/>
    </location>
</feature>
<feature type="helix" evidence="6">
    <location>
        <begin position="494"/>
        <end position="510"/>
    </location>
</feature>
<organism>
    <name type="scientific">Escherichia coli (strain K12)</name>
    <dbReference type="NCBI Taxonomy" id="83333"/>
    <lineage>
        <taxon>Bacteria</taxon>
        <taxon>Pseudomonadati</taxon>
        <taxon>Pseudomonadota</taxon>
        <taxon>Gammaproteobacteria</taxon>
        <taxon>Enterobacterales</taxon>
        <taxon>Enterobacteriaceae</taxon>
        <taxon>Escherichia</taxon>
    </lineage>
</organism>
<reference key="1">
    <citation type="journal article" date="1984" name="Biochem. J.">
        <title>DNA sequence around the Escherichia coli unc operon. Completion of the sequence of a 17 kilobase segment containing asnA, oriC, unc, glmS and phoS.</title>
        <authorList>
            <person name="Walker J.E."/>
            <person name="Gay N.J."/>
            <person name="Saraste M."/>
            <person name="Eberle A.N."/>
        </authorList>
    </citation>
    <scope>NUCLEOTIDE SEQUENCE [GENOMIC DNA]</scope>
</reference>
<reference key="2">
    <citation type="journal article" date="1981" name="Nucleic Acids Res.">
        <title>The atp operon: nucleotide sequence of the region encoding the alpha-subunit of Escherichia coli ATP-synthase.</title>
        <authorList>
            <person name="Gay N.J."/>
            <person name="Walker J.E."/>
        </authorList>
    </citation>
    <scope>NUCLEOTIDE SEQUENCE [GENOMIC DNA]</scope>
</reference>
<reference key="3">
    <citation type="journal article" date="1981" name="Biochem. Biophys. Res. Commun.">
        <title>Nucleotide sequence of the genes coding for alpha, beta and gamma subunits of the proton-translocating ATPase of Escherichia coli.</title>
        <authorList>
            <person name="Kanazawa H."/>
            <person name="Kayano T."/>
            <person name="Mabuchi K."/>
            <person name="Futai M."/>
        </authorList>
    </citation>
    <scope>NUCLEOTIDE SEQUENCE [GENOMIC DNA]</scope>
</reference>
<reference key="4">
    <citation type="journal article" date="1982" name="Ann. N. Y. Acad. Sci.">
        <title>Structure and function of H+-ATPase: what we have learned from Escherichia coli H+-ATPase.</title>
        <authorList>
            <person name="Kanazawa H."/>
            <person name="Futai M."/>
        </authorList>
    </citation>
    <scope>NUCLEOTIDE SEQUENCE [GENOMIC DNA]</scope>
</reference>
<reference key="5">
    <citation type="journal article" date="1993" name="Genomics">
        <title>DNA sequence and analysis of 136 kilobases of the Escherichia coli genome: organizational symmetry around the origin of replication.</title>
        <authorList>
            <person name="Burland V.D."/>
            <person name="Plunkett G. III"/>
            <person name="Daniels D.L."/>
            <person name="Blattner F.R."/>
        </authorList>
    </citation>
    <scope>NUCLEOTIDE SEQUENCE [LARGE SCALE GENOMIC DNA]</scope>
    <source>
        <strain>K12 / MG1655 / ATCC 47076</strain>
    </source>
</reference>
<reference key="6">
    <citation type="journal article" date="1997" name="Science">
        <title>The complete genome sequence of Escherichia coli K-12.</title>
        <authorList>
            <person name="Blattner F.R."/>
            <person name="Plunkett G. III"/>
            <person name="Bloch C.A."/>
            <person name="Perna N.T."/>
            <person name="Burland V."/>
            <person name="Riley M."/>
            <person name="Collado-Vides J."/>
            <person name="Glasner J.D."/>
            <person name="Rode C.K."/>
            <person name="Mayhew G.F."/>
            <person name="Gregor J."/>
            <person name="Davis N.W."/>
            <person name="Kirkpatrick H.A."/>
            <person name="Goeden M.A."/>
            <person name="Rose D.J."/>
            <person name="Mau B."/>
            <person name="Shao Y."/>
        </authorList>
    </citation>
    <scope>NUCLEOTIDE SEQUENCE [LARGE SCALE GENOMIC DNA]</scope>
    <source>
        <strain>K12 / MG1655 / ATCC 47076</strain>
    </source>
</reference>
<reference key="7">
    <citation type="journal article" date="2006" name="Mol. Syst. Biol.">
        <title>Highly accurate genome sequences of Escherichia coli K-12 strains MG1655 and W3110.</title>
        <authorList>
            <person name="Hayashi K."/>
            <person name="Morooka N."/>
            <person name="Yamamoto Y."/>
            <person name="Fujita K."/>
            <person name="Isono K."/>
            <person name="Choi S."/>
            <person name="Ohtsubo E."/>
            <person name="Baba T."/>
            <person name="Wanner B.L."/>
            <person name="Mori H."/>
            <person name="Horiuchi T."/>
        </authorList>
    </citation>
    <scope>NUCLEOTIDE SEQUENCE [LARGE SCALE GENOMIC DNA]</scope>
    <source>
        <strain>K12 / W3110 / ATCC 27325 / DSM 5911</strain>
    </source>
</reference>
<reference key="8">
    <citation type="journal article" date="1981" name="Mol. Gen. Genet.">
        <title>The nucleotide sequence of the atp genes coding for the F0 subunits a, b, c and the F1 subunit delta of the membrane bound ATP synthase of Escherichia coli.</title>
        <authorList>
            <person name="Nielsen J."/>
            <person name="Hansen F.G."/>
            <person name="Hoppe J."/>
            <person name="Friedl P."/>
            <person name="von Meyenburg K."/>
        </authorList>
    </citation>
    <scope>NUCLEOTIDE SEQUENCE [GENOMIC DNA] OF 1-50</scope>
</reference>
<reference key="9">
    <citation type="journal article" date="1986" name="FEBS Lett.">
        <title>Isolation of a fourth cysteinyl-containing peptide of the alpha-subunit of the F1 ATPase from Escherichia coli necessitates revision of the DNA sequence.</title>
        <authorList>
            <person name="Slan-Lotter H."/>
            <person name="Clarke D.M."/>
            <person name="Bragg P.D."/>
        </authorList>
    </citation>
    <scope>SEQUENCE REVISION TO 239-244</scope>
</reference>
<reference key="10">
    <citation type="submission" date="1994-09" db="UniProtKB">
        <authorList>
            <person name="Pasquali C."/>
            <person name="Sanchez J.-C."/>
            <person name="Ravier F."/>
            <person name="Golaz O."/>
            <person name="Hughes G.J."/>
            <person name="Frutiger S."/>
            <person name="Paquet N."/>
            <person name="Wilkins M."/>
            <person name="Appel R.D."/>
            <person name="Bairoch A."/>
            <person name="Hochstrasser D.F."/>
        </authorList>
    </citation>
    <scope>PROTEIN SEQUENCE OF 1-8</scope>
    <source>
        <strain>K12 / W3110 / ATCC 27325 / DSM 5911</strain>
    </source>
</reference>
<reference key="11">
    <citation type="journal article" date="1997" name="Electrophoresis">
        <title>Comparing the predicted and observed properties of proteins encoded in the genome of Escherichia coli K-12.</title>
        <authorList>
            <person name="Link A.J."/>
            <person name="Robison K."/>
            <person name="Church G.M."/>
        </authorList>
    </citation>
    <scope>PROTEIN SEQUENCE OF 1-12</scope>
    <source>
        <strain>K12 / EMG2</strain>
    </source>
</reference>
<reference key="12">
    <citation type="journal article" date="1988" name="J. Biol. Chem.">
        <title>Directed mutagenesis of the strongly conserved lysine 175 in the proposed nucleotide-binding domain of alpha-subunit from Escherichia coli F1-ATPase.</title>
        <authorList>
            <person name="Rao R."/>
            <person name="Pagan J."/>
            <person name="Senior A.E."/>
        </authorList>
    </citation>
    <scope>MUTAGENESIS OF LYS-175</scope>
</reference>
<reference key="13">
    <citation type="journal article" date="1997" name="Electrophoresis">
        <title>Escherichia coli proteome analysis using the gene-protein database.</title>
        <authorList>
            <person name="VanBogelen R.A."/>
            <person name="Abshire K.Z."/>
            <person name="Moldover B."/>
            <person name="Olson E.R."/>
            <person name="Neidhardt F.C."/>
        </authorList>
    </citation>
    <scope>IDENTIFICATION BY 2D-GEL</scope>
</reference>
<reference key="14">
    <citation type="journal article" date="2005" name="J. Biol. Chem.">
        <title>Protein complexes of the Escherichia coli cell envelope.</title>
        <authorList>
            <person name="Stenberg F."/>
            <person name="Chovanec P."/>
            <person name="Maslen S.L."/>
            <person name="Robinson C.V."/>
            <person name="Ilag L."/>
            <person name="von Heijne G."/>
            <person name="Daley D.O."/>
        </authorList>
    </citation>
    <scope>SUBUNIT</scope>
    <scope>SUBCELLULAR LOCATION</scope>
    <source>
        <strain>BL21-DE3</strain>
    </source>
</reference>
<reference key="15">
    <citation type="journal article" date="1999" name="Proc. Natl. Acad. Sci. U.S.A.">
        <title>Structural features of the gamma subunit of the Escherichia coli F(1) ATPase revealed by a 4.4-A resolution map obtained by X-ray crystallography.</title>
        <authorList>
            <person name="Hausrath A.C."/>
            <person name="Grueber G."/>
            <person name="Matthews B.W."/>
            <person name="Capaldi R.A."/>
        </authorList>
    </citation>
    <scope>X-RAY CRYSTALLOGRAPHY (4.4 ANGSTROMS) OF AN ALPHA(3)/BETA (3)/GAMMA/EPSILON COMPLEX</scope>
</reference>
<gene>
    <name evidence="1" type="primary">atpA</name>
    <name type="synonym">papA</name>
    <name type="synonym">uncA</name>
    <name type="ordered locus">b3734</name>
    <name type="ordered locus">JW3712</name>
</gene>
<dbReference type="EC" id="7.1.2.2" evidence="1"/>
<dbReference type="EMBL" id="X01631">
    <property type="protein sequence ID" value="CAA25780.1"/>
    <property type="status" value="ALT_SEQ"/>
    <property type="molecule type" value="Genomic_DNA"/>
</dbReference>
<dbReference type="EMBL" id="J01594">
    <property type="protein sequence ID" value="AAA24735.1"/>
    <property type="status" value="ALT_SEQ"/>
    <property type="molecule type" value="Genomic_DNA"/>
</dbReference>
<dbReference type="EMBL" id="V00265">
    <property type="protein sequence ID" value="CAA23519.1"/>
    <property type="status" value="ALT_SEQ"/>
    <property type="molecule type" value="Genomic_DNA"/>
</dbReference>
<dbReference type="EMBL" id="V00312">
    <property type="protein sequence ID" value="CAA23596.1"/>
    <property type="status" value="ALT_SEQ"/>
    <property type="molecule type" value="Genomic_DNA"/>
</dbReference>
<dbReference type="EMBL" id="M12212">
    <property type="protein sequence ID" value="AAA20045.1"/>
    <property type="molecule type" value="Unassigned_DNA"/>
</dbReference>
<dbReference type="EMBL" id="M25464">
    <property type="protein sequence ID" value="AAA83873.1"/>
    <property type="molecule type" value="Genomic_DNA"/>
</dbReference>
<dbReference type="EMBL" id="L10328">
    <property type="protein sequence ID" value="AAA62086.1"/>
    <property type="molecule type" value="Genomic_DNA"/>
</dbReference>
<dbReference type="EMBL" id="U00096">
    <property type="protein sequence ID" value="AAC76757.1"/>
    <property type="molecule type" value="Genomic_DNA"/>
</dbReference>
<dbReference type="EMBL" id="AP009048">
    <property type="protein sequence ID" value="BAE77554.1"/>
    <property type="molecule type" value="Genomic_DNA"/>
</dbReference>
<dbReference type="EMBL" id="V00266">
    <property type="protein sequence ID" value="CAA23525.1"/>
    <property type="molecule type" value="Genomic_DNA"/>
</dbReference>
<dbReference type="PIR" id="G65176">
    <property type="entry name" value="PWECA"/>
</dbReference>
<dbReference type="RefSeq" id="NP_418190.1">
    <property type="nucleotide sequence ID" value="NC_000913.3"/>
</dbReference>
<dbReference type="RefSeq" id="WP_001176745.1">
    <property type="nucleotide sequence ID" value="NZ_STEB01000015.1"/>
</dbReference>
<dbReference type="PDB" id="1D8S">
    <property type="method" value="X-ray"/>
    <property type="resolution" value="4.40 A"/>
    <property type="chains" value="A/B/C=1-513"/>
</dbReference>
<dbReference type="PDB" id="3OAA">
    <property type="method" value="X-ray"/>
    <property type="resolution" value="3.26 A"/>
    <property type="chains" value="A/B/C/I/J/K/Q/R/S/Y/Z/a=1-513"/>
</dbReference>
<dbReference type="PDB" id="5T4O">
    <property type="method" value="EM"/>
    <property type="resolution" value="6.90 A"/>
    <property type="chains" value="A/B/C=1-513"/>
</dbReference>
<dbReference type="PDB" id="5T4P">
    <property type="method" value="EM"/>
    <property type="resolution" value="7.77 A"/>
    <property type="chains" value="A/B/C=1-513"/>
</dbReference>
<dbReference type="PDB" id="5T4Q">
    <property type="method" value="EM"/>
    <property type="resolution" value="8.53 A"/>
    <property type="chains" value="A/B/C=1-513"/>
</dbReference>
<dbReference type="PDB" id="6OQR">
    <property type="method" value="EM"/>
    <property type="resolution" value="3.10 A"/>
    <property type="chains" value="A/B/C=1-513"/>
</dbReference>
<dbReference type="PDB" id="6OQS">
    <property type="method" value="EM"/>
    <property type="resolution" value="3.30 A"/>
    <property type="chains" value="A/B/C=1-513"/>
</dbReference>
<dbReference type="PDB" id="6OQT">
    <property type="method" value="EM"/>
    <property type="resolution" value="3.10 A"/>
    <property type="chains" value="A/B/C=1-513"/>
</dbReference>
<dbReference type="PDB" id="6OQU">
    <property type="method" value="EM"/>
    <property type="resolution" value="3.20 A"/>
    <property type="chains" value="A/B/C=1-513"/>
</dbReference>
<dbReference type="PDB" id="6OQV">
    <property type="method" value="EM"/>
    <property type="resolution" value="3.30 A"/>
    <property type="chains" value="A/B/C=1-513"/>
</dbReference>
<dbReference type="PDB" id="6OQW">
    <property type="method" value="EM"/>
    <property type="resolution" value="3.10 A"/>
    <property type="chains" value="A/B/C=1-513"/>
</dbReference>
<dbReference type="PDB" id="6PQV">
    <property type="method" value="EM"/>
    <property type="resolution" value="3.30 A"/>
    <property type="chains" value="A/B/C=1-513"/>
</dbReference>
<dbReference type="PDB" id="6WNQ">
    <property type="method" value="EM"/>
    <property type="resolution" value="3.40 A"/>
    <property type="chains" value="A/B/C=1-513"/>
</dbReference>
<dbReference type="PDB" id="6WNR">
    <property type="method" value="EM"/>
    <property type="resolution" value="3.30 A"/>
    <property type="chains" value="A/B/C=1-513"/>
</dbReference>
<dbReference type="PDB" id="8DBP">
    <property type="method" value="EM"/>
    <property type="resolution" value="3.60 A"/>
    <property type="chains" value="A/B/C=1-513"/>
</dbReference>
<dbReference type="PDB" id="8DBQ">
    <property type="method" value="EM"/>
    <property type="resolution" value="4.00 A"/>
    <property type="chains" value="A/B/C=2-513"/>
</dbReference>
<dbReference type="PDB" id="8DBR">
    <property type="method" value="EM"/>
    <property type="resolution" value="3.20 A"/>
    <property type="chains" value="A/B/C=1-513"/>
</dbReference>
<dbReference type="PDB" id="8DBT">
    <property type="method" value="EM"/>
    <property type="resolution" value="3.10 A"/>
    <property type="chains" value="A/B/C=1-513"/>
</dbReference>
<dbReference type="PDB" id="8DBU">
    <property type="method" value="EM"/>
    <property type="resolution" value="3.40 A"/>
    <property type="chains" value="A/B/C=1-513"/>
</dbReference>
<dbReference type="PDB" id="8DBV">
    <property type="method" value="EM"/>
    <property type="resolution" value="3.70 A"/>
    <property type="chains" value="A/B/C=1-513"/>
</dbReference>
<dbReference type="PDB" id="8DBW">
    <property type="method" value="EM"/>
    <property type="resolution" value="4.10 A"/>
    <property type="chains" value="A/B/C=2-513"/>
</dbReference>
<dbReference type="PDBsum" id="1D8S"/>
<dbReference type="PDBsum" id="3OAA"/>
<dbReference type="PDBsum" id="5T4O"/>
<dbReference type="PDBsum" id="5T4P"/>
<dbReference type="PDBsum" id="5T4Q"/>
<dbReference type="PDBsum" id="6OQR"/>
<dbReference type="PDBsum" id="6OQS"/>
<dbReference type="PDBsum" id="6OQT"/>
<dbReference type="PDBsum" id="6OQU"/>
<dbReference type="PDBsum" id="6OQV"/>
<dbReference type="PDBsum" id="6OQW"/>
<dbReference type="PDBsum" id="6PQV"/>
<dbReference type="PDBsum" id="6WNQ"/>
<dbReference type="PDBsum" id="6WNR"/>
<dbReference type="PDBsum" id="8DBP"/>
<dbReference type="PDBsum" id="8DBQ"/>
<dbReference type="PDBsum" id="8DBR"/>
<dbReference type="PDBsum" id="8DBT"/>
<dbReference type="PDBsum" id="8DBU"/>
<dbReference type="PDBsum" id="8DBV"/>
<dbReference type="PDBsum" id="8DBW"/>
<dbReference type="SMR" id="P0ABB0"/>
<dbReference type="BioGRID" id="4261818">
    <property type="interactions" value="11"/>
</dbReference>
<dbReference type="BioGRID" id="852544">
    <property type="interactions" value="9"/>
</dbReference>
<dbReference type="ComplexPortal" id="CPX-4022">
    <property type="entry name" value="ATP synthase complex"/>
</dbReference>
<dbReference type="DIP" id="DIP-31845N"/>
<dbReference type="FunCoup" id="P0ABB0">
    <property type="interactions" value="660"/>
</dbReference>
<dbReference type="IntAct" id="P0ABB0">
    <property type="interactions" value="29"/>
</dbReference>
<dbReference type="MINT" id="P0ABB0"/>
<dbReference type="STRING" id="511145.b3734"/>
<dbReference type="TCDB" id="3.A.2.1.1">
    <property type="family name" value="the h+- or na+-translocating f-type, v-type and a-type atpase (f-atpase) superfamily"/>
</dbReference>
<dbReference type="jPOST" id="P0ABB0"/>
<dbReference type="PaxDb" id="511145-b3734"/>
<dbReference type="EnsemblBacteria" id="AAC76757">
    <property type="protein sequence ID" value="AAC76757"/>
    <property type="gene ID" value="b3734"/>
</dbReference>
<dbReference type="GeneID" id="93778233"/>
<dbReference type="GeneID" id="948242"/>
<dbReference type="KEGG" id="ecj:JW3712"/>
<dbReference type="KEGG" id="eco:b3734"/>
<dbReference type="KEGG" id="ecoc:C3026_20235"/>
<dbReference type="PATRIC" id="fig|1411691.4.peg.2966"/>
<dbReference type="EchoBASE" id="EB0096"/>
<dbReference type="eggNOG" id="COG0056">
    <property type="taxonomic scope" value="Bacteria"/>
</dbReference>
<dbReference type="HOGENOM" id="CLU_010091_2_1_6"/>
<dbReference type="InParanoid" id="P0ABB0"/>
<dbReference type="OMA" id="INQRDNW"/>
<dbReference type="OrthoDB" id="9803053at2"/>
<dbReference type="PhylomeDB" id="P0ABB0"/>
<dbReference type="BioCyc" id="EcoCyc:ATPA-MONOMER"/>
<dbReference type="BioCyc" id="MetaCyc:ATPA-MONOMER"/>
<dbReference type="BRENDA" id="7.1.2.2">
    <property type="organism ID" value="2026"/>
</dbReference>
<dbReference type="EvolutionaryTrace" id="P0ABB0"/>
<dbReference type="PRO" id="PR:P0ABB0"/>
<dbReference type="Proteomes" id="UP000000625">
    <property type="component" value="Chromosome"/>
</dbReference>
<dbReference type="GO" id="GO:0016020">
    <property type="term" value="C:membrane"/>
    <property type="evidence" value="ECO:0007005"/>
    <property type="project" value="UniProtKB"/>
</dbReference>
<dbReference type="GO" id="GO:0005886">
    <property type="term" value="C:plasma membrane"/>
    <property type="evidence" value="ECO:0000303"/>
    <property type="project" value="ComplexPortal"/>
</dbReference>
<dbReference type="GO" id="GO:0045259">
    <property type="term" value="C:proton-transporting ATP synthase complex"/>
    <property type="evidence" value="ECO:0000353"/>
    <property type="project" value="ComplexPortal"/>
</dbReference>
<dbReference type="GO" id="GO:0043531">
    <property type="term" value="F:ADP binding"/>
    <property type="evidence" value="ECO:0000318"/>
    <property type="project" value="GO_Central"/>
</dbReference>
<dbReference type="GO" id="GO:0005524">
    <property type="term" value="F:ATP binding"/>
    <property type="evidence" value="ECO:0000318"/>
    <property type="project" value="GO_Central"/>
</dbReference>
<dbReference type="GO" id="GO:0046933">
    <property type="term" value="F:proton-transporting ATP synthase activity, rotational mechanism"/>
    <property type="evidence" value="ECO:0007669"/>
    <property type="project" value="UniProtKB-UniRule"/>
</dbReference>
<dbReference type="GO" id="GO:0015986">
    <property type="term" value="P:proton motive force-driven ATP synthesis"/>
    <property type="evidence" value="ECO:0000315"/>
    <property type="project" value="EcoliWiki"/>
</dbReference>
<dbReference type="GO" id="GO:0042777">
    <property type="term" value="P:proton motive force-driven plasma membrane ATP synthesis"/>
    <property type="evidence" value="ECO:0000315"/>
    <property type="project" value="ComplexPortal"/>
</dbReference>
<dbReference type="CDD" id="cd18113">
    <property type="entry name" value="ATP-synt_F1_alpha_C"/>
    <property type="match status" value="1"/>
</dbReference>
<dbReference type="CDD" id="cd18116">
    <property type="entry name" value="ATP-synt_F1_alpha_N"/>
    <property type="match status" value="1"/>
</dbReference>
<dbReference type="CDD" id="cd01132">
    <property type="entry name" value="F1-ATPase_alpha_CD"/>
    <property type="match status" value="1"/>
</dbReference>
<dbReference type="FunFam" id="1.20.150.20:FF:000001">
    <property type="entry name" value="ATP synthase subunit alpha"/>
    <property type="match status" value="1"/>
</dbReference>
<dbReference type="FunFam" id="2.40.30.20:FF:000001">
    <property type="entry name" value="ATP synthase subunit alpha"/>
    <property type="match status" value="1"/>
</dbReference>
<dbReference type="FunFam" id="3.40.50.300:FF:000002">
    <property type="entry name" value="ATP synthase subunit alpha"/>
    <property type="match status" value="1"/>
</dbReference>
<dbReference type="Gene3D" id="2.40.30.20">
    <property type="match status" value="1"/>
</dbReference>
<dbReference type="Gene3D" id="1.20.150.20">
    <property type="entry name" value="ATP synthase alpha/beta chain, C-terminal domain"/>
    <property type="match status" value="1"/>
</dbReference>
<dbReference type="Gene3D" id="3.40.50.300">
    <property type="entry name" value="P-loop containing nucleotide triphosphate hydrolases"/>
    <property type="match status" value="1"/>
</dbReference>
<dbReference type="HAMAP" id="MF_01346">
    <property type="entry name" value="ATP_synth_alpha_bact"/>
    <property type="match status" value="1"/>
</dbReference>
<dbReference type="InterPro" id="IPR023366">
    <property type="entry name" value="ATP_synth_asu-like_sf"/>
</dbReference>
<dbReference type="InterPro" id="IPR000793">
    <property type="entry name" value="ATP_synth_asu_C"/>
</dbReference>
<dbReference type="InterPro" id="IPR038376">
    <property type="entry name" value="ATP_synth_asu_C_sf"/>
</dbReference>
<dbReference type="InterPro" id="IPR033732">
    <property type="entry name" value="ATP_synth_F1_a_nt-bd_dom"/>
</dbReference>
<dbReference type="InterPro" id="IPR005294">
    <property type="entry name" value="ATP_synth_F1_asu"/>
</dbReference>
<dbReference type="InterPro" id="IPR020003">
    <property type="entry name" value="ATPase_a/bsu_AS"/>
</dbReference>
<dbReference type="InterPro" id="IPR004100">
    <property type="entry name" value="ATPase_F1/V1/A1_a/bsu_N"/>
</dbReference>
<dbReference type="InterPro" id="IPR036121">
    <property type="entry name" value="ATPase_F1/V1/A1_a/bsu_N_sf"/>
</dbReference>
<dbReference type="InterPro" id="IPR000194">
    <property type="entry name" value="ATPase_F1/V1/A1_a/bsu_nucl-bd"/>
</dbReference>
<dbReference type="InterPro" id="IPR027417">
    <property type="entry name" value="P-loop_NTPase"/>
</dbReference>
<dbReference type="NCBIfam" id="TIGR00962">
    <property type="entry name" value="atpA"/>
    <property type="match status" value="1"/>
</dbReference>
<dbReference type="NCBIfam" id="NF009884">
    <property type="entry name" value="PRK13343.1"/>
    <property type="match status" value="1"/>
</dbReference>
<dbReference type="PANTHER" id="PTHR48082">
    <property type="entry name" value="ATP SYNTHASE SUBUNIT ALPHA, MITOCHONDRIAL"/>
    <property type="match status" value="1"/>
</dbReference>
<dbReference type="PANTHER" id="PTHR48082:SF2">
    <property type="entry name" value="ATP SYNTHASE SUBUNIT ALPHA, MITOCHONDRIAL"/>
    <property type="match status" value="1"/>
</dbReference>
<dbReference type="Pfam" id="PF00006">
    <property type="entry name" value="ATP-synt_ab"/>
    <property type="match status" value="1"/>
</dbReference>
<dbReference type="Pfam" id="PF00306">
    <property type="entry name" value="ATP-synt_ab_C"/>
    <property type="match status" value="1"/>
</dbReference>
<dbReference type="Pfam" id="PF02874">
    <property type="entry name" value="ATP-synt_ab_N"/>
    <property type="match status" value="1"/>
</dbReference>
<dbReference type="SUPFAM" id="SSF47917">
    <property type="entry name" value="C-terminal domain of alpha and beta subunits of F1 ATP synthase"/>
    <property type="match status" value="1"/>
</dbReference>
<dbReference type="SUPFAM" id="SSF50615">
    <property type="entry name" value="N-terminal domain of alpha and beta subunits of F1 ATP synthase"/>
    <property type="match status" value="1"/>
</dbReference>
<dbReference type="SUPFAM" id="SSF52540">
    <property type="entry name" value="P-loop containing nucleoside triphosphate hydrolases"/>
    <property type="match status" value="1"/>
</dbReference>
<dbReference type="PROSITE" id="PS00152">
    <property type="entry name" value="ATPASE_ALPHA_BETA"/>
    <property type="match status" value="1"/>
</dbReference>
<evidence type="ECO:0000255" key="1">
    <source>
        <dbReference type="HAMAP-Rule" id="MF_01346"/>
    </source>
</evidence>
<evidence type="ECO:0000269" key="2">
    <source>
    </source>
</evidence>
<evidence type="ECO:0000269" key="3">
    <source>
    </source>
</evidence>
<evidence type="ECO:0000305" key="4"/>
<evidence type="ECO:0007829" key="5">
    <source>
        <dbReference type="PDB" id="3OAA"/>
    </source>
</evidence>
<evidence type="ECO:0007829" key="6">
    <source>
        <dbReference type="PDB" id="6OQR"/>
    </source>
</evidence>
<evidence type="ECO:0007829" key="7">
    <source>
        <dbReference type="PDB" id="6OQW"/>
    </source>
</evidence>
<comment type="function">
    <text>Produces ATP from ADP in the presence of a proton gradient across the membrane. The alpha chain is a regulatory subunit.</text>
</comment>
<comment type="catalytic activity">
    <reaction evidence="1">
        <text>ATP + H2O + 4 H(+)(in) = ADP + phosphate + 5 H(+)(out)</text>
        <dbReference type="Rhea" id="RHEA:57720"/>
        <dbReference type="ChEBI" id="CHEBI:15377"/>
        <dbReference type="ChEBI" id="CHEBI:15378"/>
        <dbReference type="ChEBI" id="CHEBI:30616"/>
        <dbReference type="ChEBI" id="CHEBI:43474"/>
        <dbReference type="ChEBI" id="CHEBI:456216"/>
        <dbReference type="EC" id="7.1.2.2"/>
    </reaction>
</comment>
<comment type="subunit">
    <text evidence="1">F-type ATPases have 2 components, CF(1) - the catalytic core - and CF(0) - the membrane proton channel. CF(1) has five subunits: alpha(3), beta(3), gamma(1), delta(1), epsilon(1). CF(0) has three main subunits: a(1), b(2) and c(9-12). The alpha and beta chains form an alternating ring which encloses part of the gamma chain. CF(1) is attached to CF(0) by a central stalk formed by the gamma and epsilon chains, while a peripheral stalk is formed by the delta and b chains.</text>
</comment>
<comment type="interaction">
    <interactant intactId="EBI-368707">
        <id>P0ABB0</id>
    </interactant>
    <interactant intactId="EBI-544362">
        <id>P0A6E6</id>
        <label>atpC</label>
    </interactant>
    <organismsDiffer>false</organismsDiffer>
    <experiments>3</experiments>
</comment>
<comment type="interaction">
    <interactant intactId="EBI-368707">
        <id>P0ABB0</id>
    </interactant>
    <interactant intactId="EBI-368783">
        <id>P0ABB4</id>
        <label>atpD</label>
    </interactant>
    <organismsDiffer>false</organismsDiffer>
    <experiments>13</experiments>
</comment>
<comment type="subcellular location">
    <subcellularLocation>
        <location evidence="1 2">Cell inner membrane</location>
        <topology evidence="1 2">Peripheral membrane protein</topology>
    </subcellularLocation>
</comment>
<comment type="similarity">
    <text evidence="1">Belongs to the ATPase alpha/beta chains family.</text>
</comment>